<evidence type="ECO:0000255" key="1">
    <source>
        <dbReference type="HAMAP-Rule" id="MF_01601"/>
    </source>
</evidence>
<gene>
    <name evidence="1" type="primary">hldD</name>
    <name type="ordered locus">Bphy_0752</name>
</gene>
<keyword id="KW-0119">Carbohydrate metabolism</keyword>
<keyword id="KW-0413">Isomerase</keyword>
<keyword id="KW-0521">NADP</keyword>
<keyword id="KW-1185">Reference proteome</keyword>
<reference key="1">
    <citation type="journal article" date="2014" name="Stand. Genomic Sci.">
        <title>Complete genome sequence of Burkholderia phymatum STM815(T), a broad host range and efficient nitrogen-fixing symbiont of Mimosa species.</title>
        <authorList>
            <person name="Moulin L."/>
            <person name="Klonowska A."/>
            <person name="Caroline B."/>
            <person name="Booth K."/>
            <person name="Vriezen J.A."/>
            <person name="Melkonian R."/>
            <person name="James E.K."/>
            <person name="Young J.P."/>
            <person name="Bena G."/>
            <person name="Hauser L."/>
            <person name="Land M."/>
            <person name="Kyrpides N."/>
            <person name="Bruce D."/>
            <person name="Chain P."/>
            <person name="Copeland A."/>
            <person name="Pitluck S."/>
            <person name="Woyke T."/>
            <person name="Lizotte-Waniewski M."/>
            <person name="Bristow J."/>
            <person name="Riley M."/>
        </authorList>
    </citation>
    <scope>NUCLEOTIDE SEQUENCE [LARGE SCALE GENOMIC DNA]</scope>
    <source>
        <strain>DSM 17167 / CIP 108236 / LMG 21445 / STM815</strain>
    </source>
</reference>
<sequence>MTLIVTGAAGFIGSNLVKALNERGEDGIIAVDNLTRADKFKNLVDCEIDDYLDKTEFVERFARGDFGKVRAIFHEGACSDTMETDGRYMMDNNFRYSRAVLDACLAQGVQFLYASSAATYGGSTRFVEEREVEAPLNVYGYSKFLFDQVIRRVLPTAKSQIAGFRYFNVYGPRESHKARMASVAFHNFNQFRAEGKVKLFGEYNGYAAGEQTRDFVSVEDLVKVNLHFFDHPEKSGIFNLGSGRAQPFNDIASTVVNALRALDGEPALSLAELVQRGLIEYIPFPDALRGKYQCFTQADLTKLRAAGYDAPFLTVQEGVDRYVRWLSGQV</sequence>
<dbReference type="EC" id="5.1.3.20" evidence="1"/>
<dbReference type="EMBL" id="CP001043">
    <property type="protein sequence ID" value="ACC69941.1"/>
    <property type="molecule type" value="Genomic_DNA"/>
</dbReference>
<dbReference type="RefSeq" id="WP_012400161.1">
    <property type="nucleotide sequence ID" value="NC_010622.1"/>
</dbReference>
<dbReference type="SMR" id="B2JF12"/>
<dbReference type="STRING" id="391038.Bphy_0752"/>
<dbReference type="KEGG" id="bph:Bphy_0752"/>
<dbReference type="eggNOG" id="COG0451">
    <property type="taxonomic scope" value="Bacteria"/>
</dbReference>
<dbReference type="HOGENOM" id="CLU_007383_1_3_4"/>
<dbReference type="OrthoDB" id="9803010at2"/>
<dbReference type="UniPathway" id="UPA00356">
    <property type="reaction ID" value="UER00440"/>
</dbReference>
<dbReference type="Proteomes" id="UP000001192">
    <property type="component" value="Chromosome 1"/>
</dbReference>
<dbReference type="GO" id="GO:0008712">
    <property type="term" value="F:ADP-glyceromanno-heptose 6-epimerase activity"/>
    <property type="evidence" value="ECO:0007669"/>
    <property type="project" value="UniProtKB-UniRule"/>
</dbReference>
<dbReference type="GO" id="GO:0050661">
    <property type="term" value="F:NADP binding"/>
    <property type="evidence" value="ECO:0007669"/>
    <property type="project" value="InterPro"/>
</dbReference>
<dbReference type="GO" id="GO:0097171">
    <property type="term" value="P:ADP-L-glycero-beta-D-manno-heptose biosynthetic process"/>
    <property type="evidence" value="ECO:0007669"/>
    <property type="project" value="UniProtKB-UniPathway"/>
</dbReference>
<dbReference type="GO" id="GO:0005975">
    <property type="term" value="P:carbohydrate metabolic process"/>
    <property type="evidence" value="ECO:0007669"/>
    <property type="project" value="UniProtKB-UniRule"/>
</dbReference>
<dbReference type="CDD" id="cd05248">
    <property type="entry name" value="ADP_GME_SDR_e"/>
    <property type="match status" value="1"/>
</dbReference>
<dbReference type="Gene3D" id="3.40.50.720">
    <property type="entry name" value="NAD(P)-binding Rossmann-like Domain"/>
    <property type="match status" value="1"/>
</dbReference>
<dbReference type="Gene3D" id="3.90.25.10">
    <property type="entry name" value="UDP-galactose 4-epimerase, domain 1"/>
    <property type="match status" value="1"/>
</dbReference>
<dbReference type="HAMAP" id="MF_01601">
    <property type="entry name" value="Heptose_epimerase"/>
    <property type="match status" value="1"/>
</dbReference>
<dbReference type="InterPro" id="IPR001509">
    <property type="entry name" value="Epimerase_deHydtase"/>
</dbReference>
<dbReference type="InterPro" id="IPR011912">
    <property type="entry name" value="Heptose_epim"/>
</dbReference>
<dbReference type="InterPro" id="IPR036291">
    <property type="entry name" value="NAD(P)-bd_dom_sf"/>
</dbReference>
<dbReference type="NCBIfam" id="TIGR02197">
    <property type="entry name" value="heptose_epim"/>
    <property type="match status" value="1"/>
</dbReference>
<dbReference type="PANTHER" id="PTHR43103:SF3">
    <property type="entry name" value="ADP-L-GLYCERO-D-MANNO-HEPTOSE-6-EPIMERASE"/>
    <property type="match status" value="1"/>
</dbReference>
<dbReference type="PANTHER" id="PTHR43103">
    <property type="entry name" value="NUCLEOSIDE-DIPHOSPHATE-SUGAR EPIMERASE"/>
    <property type="match status" value="1"/>
</dbReference>
<dbReference type="Pfam" id="PF01370">
    <property type="entry name" value="Epimerase"/>
    <property type="match status" value="1"/>
</dbReference>
<dbReference type="SUPFAM" id="SSF51735">
    <property type="entry name" value="NAD(P)-binding Rossmann-fold domains"/>
    <property type="match status" value="1"/>
</dbReference>
<name>HLDD_PARP8</name>
<organism>
    <name type="scientific">Paraburkholderia phymatum (strain DSM 17167 / CIP 108236 / LMG 21445 / STM815)</name>
    <name type="common">Burkholderia phymatum</name>
    <dbReference type="NCBI Taxonomy" id="391038"/>
    <lineage>
        <taxon>Bacteria</taxon>
        <taxon>Pseudomonadati</taxon>
        <taxon>Pseudomonadota</taxon>
        <taxon>Betaproteobacteria</taxon>
        <taxon>Burkholderiales</taxon>
        <taxon>Burkholderiaceae</taxon>
        <taxon>Paraburkholderia</taxon>
    </lineage>
</organism>
<feature type="chain" id="PRO_1000190399" description="ADP-L-glycero-D-manno-heptose-6-epimerase">
    <location>
        <begin position="1"/>
        <end position="330"/>
    </location>
</feature>
<feature type="active site" description="Proton acceptor" evidence="1">
    <location>
        <position position="139"/>
    </location>
</feature>
<feature type="active site" description="Proton acceptor" evidence="1">
    <location>
        <position position="177"/>
    </location>
</feature>
<feature type="binding site" evidence="1">
    <location>
        <begin position="11"/>
        <end position="12"/>
    </location>
    <ligand>
        <name>NADP(+)</name>
        <dbReference type="ChEBI" id="CHEBI:58349"/>
    </ligand>
</feature>
<feature type="binding site" evidence="1">
    <location>
        <begin position="32"/>
        <end position="33"/>
    </location>
    <ligand>
        <name>NADP(+)</name>
        <dbReference type="ChEBI" id="CHEBI:58349"/>
    </ligand>
</feature>
<feature type="binding site" evidence="1">
    <location>
        <position position="39"/>
    </location>
    <ligand>
        <name>NADP(+)</name>
        <dbReference type="ChEBI" id="CHEBI:58349"/>
    </ligand>
</feature>
<feature type="binding site" evidence="1">
    <location>
        <position position="54"/>
    </location>
    <ligand>
        <name>NADP(+)</name>
        <dbReference type="ChEBI" id="CHEBI:58349"/>
    </ligand>
</feature>
<feature type="binding site" evidence="1">
    <location>
        <begin position="75"/>
        <end position="79"/>
    </location>
    <ligand>
        <name>NADP(+)</name>
        <dbReference type="ChEBI" id="CHEBI:58349"/>
    </ligand>
</feature>
<feature type="binding site" evidence="1">
    <location>
        <position position="92"/>
    </location>
    <ligand>
        <name>NADP(+)</name>
        <dbReference type="ChEBI" id="CHEBI:58349"/>
    </ligand>
</feature>
<feature type="binding site" evidence="1">
    <location>
        <position position="143"/>
    </location>
    <ligand>
        <name>NADP(+)</name>
        <dbReference type="ChEBI" id="CHEBI:58349"/>
    </ligand>
</feature>
<feature type="binding site" evidence="1">
    <location>
        <position position="168"/>
    </location>
    <ligand>
        <name>substrate</name>
    </ligand>
</feature>
<feature type="binding site" evidence="1">
    <location>
        <position position="169"/>
    </location>
    <ligand>
        <name>NADP(+)</name>
        <dbReference type="ChEBI" id="CHEBI:58349"/>
    </ligand>
</feature>
<feature type="binding site" evidence="1">
    <location>
        <position position="177"/>
    </location>
    <ligand>
        <name>NADP(+)</name>
        <dbReference type="ChEBI" id="CHEBI:58349"/>
    </ligand>
</feature>
<feature type="binding site" evidence="1">
    <location>
        <position position="179"/>
    </location>
    <ligand>
        <name>substrate</name>
    </ligand>
</feature>
<feature type="binding site" evidence="1">
    <location>
        <position position="186"/>
    </location>
    <ligand>
        <name>substrate</name>
    </ligand>
</feature>
<feature type="binding site" evidence="1">
    <location>
        <begin position="200"/>
        <end position="203"/>
    </location>
    <ligand>
        <name>substrate</name>
    </ligand>
</feature>
<feature type="binding site" evidence="1">
    <location>
        <position position="213"/>
    </location>
    <ligand>
        <name>substrate</name>
    </ligand>
</feature>
<feature type="binding site" evidence="1">
    <location>
        <position position="292"/>
    </location>
    <ligand>
        <name>substrate</name>
    </ligand>
</feature>
<comment type="function">
    <text evidence="1">Catalyzes the interconversion between ADP-D-glycero-beta-D-manno-heptose and ADP-L-glycero-beta-D-manno-heptose via an epimerization at carbon 6 of the heptose.</text>
</comment>
<comment type="catalytic activity">
    <reaction evidence="1">
        <text>ADP-D-glycero-beta-D-manno-heptose = ADP-L-glycero-beta-D-manno-heptose</text>
        <dbReference type="Rhea" id="RHEA:17577"/>
        <dbReference type="ChEBI" id="CHEBI:59967"/>
        <dbReference type="ChEBI" id="CHEBI:61506"/>
        <dbReference type="EC" id="5.1.3.20"/>
    </reaction>
</comment>
<comment type="cofactor">
    <cofactor evidence="1">
        <name>NADP(+)</name>
        <dbReference type="ChEBI" id="CHEBI:58349"/>
    </cofactor>
    <text evidence="1">Binds 1 NADP(+) per subunit.</text>
</comment>
<comment type="pathway">
    <text evidence="1">Nucleotide-sugar biosynthesis; ADP-L-glycero-beta-D-manno-heptose biosynthesis; ADP-L-glycero-beta-D-manno-heptose from D-glycero-beta-D-manno-heptose 7-phosphate: step 4/4.</text>
</comment>
<comment type="subunit">
    <text evidence="1">Homopentamer.</text>
</comment>
<comment type="domain">
    <text evidence="1">Contains a large N-terminal NADP-binding domain, and a smaller C-terminal substrate-binding domain.</text>
</comment>
<comment type="similarity">
    <text evidence="1">Belongs to the NAD(P)-dependent epimerase/dehydratase family. HldD subfamily.</text>
</comment>
<accession>B2JF12</accession>
<proteinExistence type="inferred from homology"/>
<protein>
    <recommendedName>
        <fullName evidence="1">ADP-L-glycero-D-manno-heptose-6-epimerase</fullName>
        <ecNumber evidence="1">5.1.3.20</ecNumber>
    </recommendedName>
    <alternativeName>
        <fullName evidence="1">ADP-L-glycero-beta-D-manno-heptose-6-epimerase</fullName>
        <shortName evidence="1">ADP-glyceromanno-heptose 6-epimerase</shortName>
        <shortName evidence="1">ADP-hep 6-epimerase</shortName>
        <shortName evidence="1">AGME</shortName>
    </alternativeName>
</protein>